<gene>
    <name type="primary">RPL15</name>
    <name type="synonym">EC45</name>
    <name type="ORF">TCBAP0781</name>
</gene>
<comment type="function">
    <text evidence="4 7">Component of the large ribosomal subunit. The ribosome is a large ribonucleoprotein complex responsible for the synthesis of proteins in the cell.</text>
</comment>
<comment type="subunit">
    <text evidence="3 4 7">Component of the large ribosomal subunit (PubMed:23636399, PubMed:32669547). Interacts with IFIT1 (via TPR repeats 1-4) (PubMed:21612406).</text>
</comment>
<comment type="interaction">
    <interactant intactId="EBI-443462">
        <id>P61313</id>
    </interactant>
    <interactant intactId="EBI-930964">
        <id>P54253</id>
        <label>ATXN1</label>
    </interactant>
    <organismsDiffer>false</organismsDiffer>
    <experiments>3</experiments>
</comment>
<comment type="interaction">
    <interactant intactId="EBI-443462">
        <id>P61313</id>
    </interactant>
    <interactant intactId="EBI-466029">
        <id>P42858</id>
        <label>HTT</label>
    </interactant>
    <organismsDiffer>false</organismsDiffer>
    <experiments>3</experiments>
</comment>
<comment type="interaction">
    <interactant intactId="EBI-443462">
        <id>P61313</id>
    </interactant>
    <interactant intactId="EBI-748397">
        <id>P50222</id>
        <label>MEOX2</label>
    </interactant>
    <organismsDiffer>false</organismsDiffer>
    <experiments>3</experiments>
</comment>
<comment type="interaction">
    <interactant intactId="EBI-443462">
        <id>P61313</id>
    </interactant>
    <interactant intactId="EBI-16439278">
        <id>Q6FHY5</id>
        <label>MEOX2</label>
    </interactant>
    <organismsDiffer>false</organismsDiffer>
    <experiments>3</experiments>
</comment>
<comment type="subcellular location">
    <subcellularLocation>
        <location evidence="4">Cytoplasm</location>
    </subcellularLocation>
</comment>
<comment type="alternative products">
    <event type="alternative splicing"/>
    <isoform>
        <id>P61313-1</id>
        <name>1</name>
        <sequence type="displayed"/>
    </isoform>
    <isoform>
        <id>P61313-2</id>
        <name>2</name>
        <sequence type="described" ref="VSP_045144"/>
    </isoform>
</comment>
<comment type="disease" evidence="5">
    <disease id="DI-03972">
        <name>Diamond-Blackfan anemia 12</name>
        <acronym>DBA12</acronym>
        <description>A form of Diamond-Blackfan anemia, a congenital non-regenerative hypoplastic anemia that usually presents early in infancy. Diamond-Blackfan anemia is characterized by a moderate to severe macrocytic anemia, erythroblastopenia, and an increased risk of malignancy. 30 to 40% of Diamond-Blackfan anemia patients present with short stature and congenital anomalies, the most frequent being craniofacial (Pierre-Robin syndrome and cleft palate), thumb and urogenital anomalies.</description>
        <dbReference type="MIM" id="615550"/>
    </disease>
    <text>The disease is caused by variants affecting the gene represented in this entry.</text>
</comment>
<comment type="similarity">
    <text evidence="10">Belongs to the eukaryotic ribosomal protein eL15 family.</text>
</comment>
<comment type="sequence caution" evidence="10">
    <conflict type="frameshift">
        <sequence resource="EMBL-CDS" id="AAA36583"/>
    </conflict>
</comment>
<keyword id="KW-0002">3D-structure</keyword>
<keyword id="KW-0025">Alternative splicing</keyword>
<keyword id="KW-0963">Cytoplasm</keyword>
<keyword id="KW-1024">Diamond-Blackfan anemia</keyword>
<keyword id="KW-1017">Isopeptide bond</keyword>
<keyword id="KW-0449">Lipoprotein</keyword>
<keyword id="KW-0519">Myristate</keyword>
<keyword id="KW-0597">Phosphoprotein</keyword>
<keyword id="KW-1267">Proteomics identification</keyword>
<keyword id="KW-1185">Reference proteome</keyword>
<keyword id="KW-0687">Ribonucleoprotein</keyword>
<keyword id="KW-0689">Ribosomal protein</keyword>
<keyword id="KW-0832">Ubl conjugation</keyword>
<sequence>MGAYKYIQELWRKKQSDVMRFLLRVRCWQYRQLSALHRAPRPTRPDKARRLGYKAKQGYVIYRIRVRRGGRKRPVPKGATYGKPVHHGVNQLKFARSLQSVAEERAGRHCGALRVLNSYWVGEDSTYKFFEVILIDPFHKAIRRNPDTQWITKPVHKHREMRGLTSAGRKSRGLGKGHKFHHTIGGSRRAAWRRRNTLQLHRYR</sequence>
<organism>
    <name type="scientific">Homo sapiens</name>
    <name type="common">Human</name>
    <dbReference type="NCBI Taxonomy" id="9606"/>
    <lineage>
        <taxon>Eukaryota</taxon>
        <taxon>Metazoa</taxon>
        <taxon>Chordata</taxon>
        <taxon>Craniata</taxon>
        <taxon>Vertebrata</taxon>
        <taxon>Euteleostomi</taxon>
        <taxon>Mammalia</taxon>
        <taxon>Eutheria</taxon>
        <taxon>Euarchontoglires</taxon>
        <taxon>Primates</taxon>
        <taxon>Haplorrhini</taxon>
        <taxon>Catarrhini</taxon>
        <taxon>Hominidae</taxon>
        <taxon>Homo</taxon>
    </lineage>
</organism>
<accession>P61313</accession>
<accession>P39030</accession>
<accession>P41051</accession>
<accession>Q5U0C0</accession>
<accession>Q642I1</accession>
<accession>Q6IPX6</accession>
<accession>Q8WYP2</accession>
<accession>Q96C44</accession>
<accession>Q9H2E5</accession>
<dbReference type="EMBL" id="L25899">
    <property type="protein sequence ID" value="AAA36583.1"/>
    <property type="status" value="ALT_FRAME"/>
    <property type="molecule type" value="mRNA"/>
</dbReference>
<dbReference type="EMBL" id="AF279903">
    <property type="protein sequence ID" value="AAG44837.1"/>
    <property type="molecule type" value="mRNA"/>
</dbReference>
<dbReference type="EMBL" id="AB061823">
    <property type="protein sequence ID" value="BAB79461.1"/>
    <property type="molecule type" value="Genomic_DNA"/>
</dbReference>
<dbReference type="EMBL" id="AY347528">
    <property type="protein sequence ID" value="AAQ24859.1"/>
    <property type="molecule type" value="mRNA"/>
</dbReference>
<dbReference type="EMBL" id="AF283772">
    <property type="protein sequence ID" value="AAG15591.1"/>
    <property type="molecule type" value="mRNA"/>
</dbReference>
<dbReference type="EMBL" id="AK290694">
    <property type="protein sequence ID" value="BAF83383.1"/>
    <property type="molecule type" value="mRNA"/>
</dbReference>
<dbReference type="EMBL" id="AK292000">
    <property type="protein sequence ID" value="BAF84689.1"/>
    <property type="molecule type" value="mRNA"/>
</dbReference>
<dbReference type="EMBL" id="BT019672">
    <property type="protein sequence ID" value="AAV38478.1"/>
    <property type="molecule type" value="mRNA"/>
</dbReference>
<dbReference type="EMBL" id="AC124914">
    <property type="status" value="NOT_ANNOTATED_CDS"/>
    <property type="molecule type" value="Genomic_DNA"/>
</dbReference>
<dbReference type="EMBL" id="CH471055">
    <property type="protein sequence ID" value="EAW64338.1"/>
    <property type="molecule type" value="Genomic_DNA"/>
</dbReference>
<dbReference type="EMBL" id="BC081565">
    <property type="protein sequence ID" value="AAH81565.1"/>
    <property type="molecule type" value="mRNA"/>
</dbReference>
<dbReference type="EMBL" id="BC014837">
    <property type="protein sequence ID" value="AAH14837.1"/>
    <property type="molecule type" value="mRNA"/>
</dbReference>
<dbReference type="EMBL" id="BC068198">
    <property type="protein sequence ID" value="AAH68198.1"/>
    <property type="molecule type" value="mRNA"/>
</dbReference>
<dbReference type="EMBL" id="BC070328">
    <property type="protein sequence ID" value="AAH70328.1"/>
    <property type="molecule type" value="mRNA"/>
</dbReference>
<dbReference type="EMBL" id="BC071672">
    <property type="protein sequence ID" value="AAH71672.1"/>
    <property type="molecule type" value="mRNA"/>
</dbReference>
<dbReference type="CCDS" id="CCDS2640.1">
    <molecule id="P61313-1"/>
</dbReference>
<dbReference type="CCDS" id="CCDS58818.1">
    <molecule id="P61313-2"/>
</dbReference>
<dbReference type="RefSeq" id="NP_001240308.1">
    <molecule id="P61313-1"/>
    <property type="nucleotide sequence ID" value="NM_001253379.2"/>
</dbReference>
<dbReference type="RefSeq" id="NP_001240309.1">
    <molecule id="P61313-1"/>
    <property type="nucleotide sequence ID" value="NM_001253380.2"/>
</dbReference>
<dbReference type="RefSeq" id="NP_001240311.1">
    <molecule id="P61313-1"/>
    <property type="nucleotide sequence ID" value="NM_001253382.2"/>
</dbReference>
<dbReference type="RefSeq" id="NP_001240312.1">
    <molecule id="P61313-1"/>
    <property type="nucleotide sequence ID" value="NM_001253383.3"/>
</dbReference>
<dbReference type="RefSeq" id="NP_001240313.1">
    <molecule id="P61313-2"/>
    <property type="nucleotide sequence ID" value="NM_001253384.2"/>
</dbReference>
<dbReference type="RefSeq" id="NP_002939.2">
    <molecule id="P61313-1"/>
    <property type="nucleotide sequence ID" value="NM_002948.3"/>
</dbReference>
<dbReference type="PDB" id="4UG0">
    <property type="method" value="EM"/>
    <property type="chains" value="LN=1-204"/>
</dbReference>
<dbReference type="PDB" id="4V6X">
    <property type="method" value="EM"/>
    <property type="resolution" value="5.00 A"/>
    <property type="chains" value="CN=1-204"/>
</dbReference>
<dbReference type="PDB" id="5AJ0">
    <property type="method" value="EM"/>
    <property type="resolution" value="3.50 A"/>
    <property type="chains" value="AN=1-204"/>
</dbReference>
<dbReference type="PDB" id="5LKS">
    <property type="method" value="EM"/>
    <property type="resolution" value="3.60 A"/>
    <property type="chains" value="LN=1-204"/>
</dbReference>
<dbReference type="PDB" id="5T2C">
    <property type="method" value="EM"/>
    <property type="resolution" value="3.60 A"/>
    <property type="chains" value="t=1-204"/>
</dbReference>
<dbReference type="PDB" id="6IP5">
    <property type="method" value="EM"/>
    <property type="resolution" value="3.90 A"/>
    <property type="chains" value="2H=1-204"/>
</dbReference>
<dbReference type="PDB" id="6IP6">
    <property type="method" value="EM"/>
    <property type="resolution" value="4.50 A"/>
    <property type="chains" value="2H=1-204"/>
</dbReference>
<dbReference type="PDB" id="6IP8">
    <property type="method" value="EM"/>
    <property type="resolution" value="3.90 A"/>
    <property type="chains" value="2H=1-204"/>
</dbReference>
<dbReference type="PDB" id="6LQM">
    <property type="method" value="EM"/>
    <property type="resolution" value="3.09 A"/>
    <property type="chains" value="U=1-204"/>
</dbReference>
<dbReference type="PDB" id="6LSR">
    <property type="method" value="EM"/>
    <property type="resolution" value="3.13 A"/>
    <property type="chains" value="U=1-204"/>
</dbReference>
<dbReference type="PDB" id="6LSS">
    <property type="method" value="EM"/>
    <property type="resolution" value="3.23 A"/>
    <property type="chains" value="U=1-204"/>
</dbReference>
<dbReference type="PDB" id="6LU8">
    <property type="method" value="EM"/>
    <property type="resolution" value="3.13 A"/>
    <property type="chains" value="U=1-204"/>
</dbReference>
<dbReference type="PDB" id="6OLE">
    <property type="method" value="EM"/>
    <property type="resolution" value="3.10 A"/>
    <property type="chains" value="O=2-204"/>
</dbReference>
<dbReference type="PDB" id="6OLF">
    <property type="method" value="EM"/>
    <property type="resolution" value="3.90 A"/>
    <property type="chains" value="O=2-204"/>
</dbReference>
<dbReference type="PDB" id="6OLG">
    <property type="method" value="EM"/>
    <property type="resolution" value="3.40 A"/>
    <property type="chains" value="AN=2-204"/>
</dbReference>
<dbReference type="PDB" id="6OLI">
    <property type="method" value="EM"/>
    <property type="resolution" value="3.50 A"/>
    <property type="chains" value="O=2-204"/>
</dbReference>
<dbReference type="PDB" id="6OLZ">
    <property type="method" value="EM"/>
    <property type="resolution" value="3.90 A"/>
    <property type="chains" value="AN=2-204"/>
</dbReference>
<dbReference type="PDB" id="6OM0">
    <property type="method" value="EM"/>
    <property type="resolution" value="3.10 A"/>
    <property type="chains" value="O=2-204"/>
</dbReference>
<dbReference type="PDB" id="6OM7">
    <property type="method" value="EM"/>
    <property type="resolution" value="3.70 A"/>
    <property type="chains" value="O=2-204"/>
</dbReference>
<dbReference type="PDB" id="6QZP">
    <property type="method" value="EM"/>
    <property type="resolution" value="2.90 A"/>
    <property type="chains" value="LN=2-204"/>
</dbReference>
<dbReference type="PDB" id="6W6L">
    <property type="method" value="EM"/>
    <property type="resolution" value="3.84 A"/>
    <property type="chains" value="O=1-204"/>
</dbReference>
<dbReference type="PDB" id="6XA1">
    <property type="method" value="EM"/>
    <property type="resolution" value="2.80 A"/>
    <property type="chains" value="LN=2-204"/>
</dbReference>
<dbReference type="PDB" id="6Y0G">
    <property type="method" value="EM"/>
    <property type="resolution" value="3.20 A"/>
    <property type="chains" value="LN=1-204"/>
</dbReference>
<dbReference type="PDB" id="6Y2L">
    <property type="method" value="EM"/>
    <property type="resolution" value="3.00 A"/>
    <property type="chains" value="LN=1-204"/>
</dbReference>
<dbReference type="PDB" id="6Y57">
    <property type="method" value="EM"/>
    <property type="resolution" value="3.50 A"/>
    <property type="chains" value="LN=1-204"/>
</dbReference>
<dbReference type="PDB" id="6Y6X">
    <property type="method" value="EM"/>
    <property type="resolution" value="2.80 A"/>
    <property type="chains" value="LN=2-204"/>
</dbReference>
<dbReference type="PDB" id="6Z6L">
    <property type="method" value="EM"/>
    <property type="resolution" value="3.00 A"/>
    <property type="chains" value="LN=1-204"/>
</dbReference>
<dbReference type="PDB" id="6Z6M">
    <property type="method" value="EM"/>
    <property type="resolution" value="3.10 A"/>
    <property type="chains" value="LN=1-204"/>
</dbReference>
<dbReference type="PDB" id="6Z6N">
    <property type="method" value="EM"/>
    <property type="resolution" value="2.90 A"/>
    <property type="chains" value="LN=1-204"/>
</dbReference>
<dbReference type="PDB" id="6ZM7">
    <property type="method" value="EM"/>
    <property type="resolution" value="2.70 A"/>
    <property type="chains" value="LN=1-204"/>
</dbReference>
<dbReference type="PDB" id="6ZME">
    <property type="method" value="EM"/>
    <property type="resolution" value="3.00 A"/>
    <property type="chains" value="LN=1-204"/>
</dbReference>
<dbReference type="PDB" id="6ZMI">
    <property type="method" value="EM"/>
    <property type="resolution" value="2.60 A"/>
    <property type="chains" value="LN=1-204"/>
</dbReference>
<dbReference type="PDB" id="6ZMO">
    <property type="method" value="EM"/>
    <property type="resolution" value="3.10 A"/>
    <property type="chains" value="LN=1-204"/>
</dbReference>
<dbReference type="PDB" id="7BHP">
    <property type="method" value="EM"/>
    <property type="resolution" value="3.30 A"/>
    <property type="chains" value="LN=1-204"/>
</dbReference>
<dbReference type="PDB" id="7F5S">
    <property type="method" value="EM"/>
    <property type="resolution" value="2.72 A"/>
    <property type="chains" value="LN=1-204"/>
</dbReference>
<dbReference type="PDB" id="7OW7">
    <property type="method" value="EM"/>
    <property type="resolution" value="2.20 A"/>
    <property type="chains" value="t=1-204"/>
</dbReference>
<dbReference type="PDB" id="7XNX">
    <property type="method" value="EM"/>
    <property type="resolution" value="2.70 A"/>
    <property type="chains" value="LN=1-204"/>
</dbReference>
<dbReference type="PDB" id="7XNY">
    <property type="method" value="EM"/>
    <property type="resolution" value="2.50 A"/>
    <property type="chains" value="LN=1-204"/>
</dbReference>
<dbReference type="PDB" id="8A3D">
    <property type="method" value="EM"/>
    <property type="resolution" value="1.67 A"/>
    <property type="chains" value="l=1-204"/>
</dbReference>
<dbReference type="PDB" id="8FKP">
    <property type="method" value="EM"/>
    <property type="resolution" value="2.85 A"/>
    <property type="chains" value="L9=1-204"/>
</dbReference>
<dbReference type="PDB" id="8FKQ">
    <property type="method" value="EM"/>
    <property type="resolution" value="2.76 A"/>
    <property type="chains" value="L9=1-204"/>
</dbReference>
<dbReference type="PDB" id="8FKR">
    <property type="method" value="EM"/>
    <property type="resolution" value="2.89 A"/>
    <property type="chains" value="L9=1-204"/>
</dbReference>
<dbReference type="PDB" id="8FKS">
    <property type="method" value="EM"/>
    <property type="resolution" value="2.88 A"/>
    <property type="chains" value="L9=1-204"/>
</dbReference>
<dbReference type="PDB" id="8FKT">
    <property type="method" value="EM"/>
    <property type="resolution" value="2.81 A"/>
    <property type="chains" value="L9=1-204"/>
</dbReference>
<dbReference type="PDB" id="8FKU">
    <property type="method" value="EM"/>
    <property type="resolution" value="2.82 A"/>
    <property type="chains" value="L9=1-204"/>
</dbReference>
<dbReference type="PDB" id="8FKV">
    <property type="method" value="EM"/>
    <property type="resolution" value="2.47 A"/>
    <property type="chains" value="L9=1-204"/>
</dbReference>
<dbReference type="PDB" id="8FKW">
    <property type="method" value="EM"/>
    <property type="resolution" value="2.50 A"/>
    <property type="chains" value="L9=1-204"/>
</dbReference>
<dbReference type="PDB" id="8FKX">
    <property type="method" value="EM"/>
    <property type="resolution" value="2.59 A"/>
    <property type="chains" value="L9=1-204"/>
</dbReference>
<dbReference type="PDB" id="8FKY">
    <property type="method" value="EM"/>
    <property type="resolution" value="2.67 A"/>
    <property type="chains" value="L9=1-204"/>
</dbReference>
<dbReference type="PDB" id="8FKZ">
    <property type="method" value="EM"/>
    <property type="resolution" value="3.04 A"/>
    <property type="chains" value="L9=1-204"/>
</dbReference>
<dbReference type="PDB" id="8FL2">
    <property type="method" value="EM"/>
    <property type="resolution" value="2.67 A"/>
    <property type="chains" value="L9=1-204"/>
</dbReference>
<dbReference type="PDB" id="8FL3">
    <property type="method" value="EM"/>
    <property type="resolution" value="2.53 A"/>
    <property type="chains" value="L9=1-204"/>
</dbReference>
<dbReference type="PDB" id="8FL4">
    <property type="method" value="EM"/>
    <property type="resolution" value="2.89 A"/>
    <property type="chains" value="L9=1-204"/>
</dbReference>
<dbReference type="PDB" id="8FL6">
    <property type="method" value="EM"/>
    <property type="resolution" value="2.62 A"/>
    <property type="chains" value="L9=1-204"/>
</dbReference>
<dbReference type="PDB" id="8FL7">
    <property type="method" value="EM"/>
    <property type="resolution" value="2.55 A"/>
    <property type="chains" value="L9=1-204"/>
</dbReference>
<dbReference type="PDB" id="8FL9">
    <property type="method" value="EM"/>
    <property type="resolution" value="2.75 A"/>
    <property type="chains" value="L9=1-204"/>
</dbReference>
<dbReference type="PDB" id="8FLA">
    <property type="method" value="EM"/>
    <property type="resolution" value="2.63 A"/>
    <property type="chains" value="L9=1-204"/>
</dbReference>
<dbReference type="PDB" id="8FLB">
    <property type="method" value="EM"/>
    <property type="resolution" value="2.55 A"/>
    <property type="chains" value="L9=1-204"/>
</dbReference>
<dbReference type="PDB" id="8FLC">
    <property type="method" value="EM"/>
    <property type="resolution" value="2.76 A"/>
    <property type="chains" value="L9=1-204"/>
</dbReference>
<dbReference type="PDB" id="8FLD">
    <property type="method" value="EM"/>
    <property type="resolution" value="2.58 A"/>
    <property type="chains" value="L9=1-204"/>
</dbReference>
<dbReference type="PDB" id="8FLE">
    <property type="method" value="EM"/>
    <property type="resolution" value="2.48 A"/>
    <property type="chains" value="L9=1-204"/>
</dbReference>
<dbReference type="PDB" id="8FLF">
    <property type="method" value="EM"/>
    <property type="resolution" value="2.65 A"/>
    <property type="chains" value="L9=1-204"/>
</dbReference>
<dbReference type="PDB" id="8G5Y">
    <property type="method" value="EM"/>
    <property type="resolution" value="2.29 A"/>
    <property type="chains" value="LN=1-204"/>
</dbReference>
<dbReference type="PDB" id="8G5Z">
    <property type="method" value="EM"/>
    <property type="resolution" value="2.64 A"/>
    <property type="chains" value="LN=2-204"/>
</dbReference>
<dbReference type="PDB" id="8G60">
    <property type="method" value="EM"/>
    <property type="resolution" value="2.54 A"/>
    <property type="chains" value="LN=1-204"/>
</dbReference>
<dbReference type="PDB" id="8G61">
    <property type="method" value="EM"/>
    <property type="resolution" value="2.94 A"/>
    <property type="chains" value="LN=1-204"/>
</dbReference>
<dbReference type="PDB" id="8G6J">
    <property type="method" value="EM"/>
    <property type="resolution" value="2.80 A"/>
    <property type="chains" value="LN=1-204"/>
</dbReference>
<dbReference type="PDB" id="8GLP">
    <property type="method" value="EM"/>
    <property type="resolution" value="1.67 A"/>
    <property type="chains" value="LN=1-204"/>
</dbReference>
<dbReference type="PDB" id="8IDT">
    <property type="method" value="EM"/>
    <property type="resolution" value="2.80 A"/>
    <property type="chains" value="U=1-204"/>
</dbReference>
<dbReference type="PDB" id="8IDY">
    <property type="method" value="EM"/>
    <property type="resolution" value="3.00 A"/>
    <property type="chains" value="U=1-204"/>
</dbReference>
<dbReference type="PDB" id="8IE3">
    <property type="method" value="EM"/>
    <property type="resolution" value="3.30 A"/>
    <property type="chains" value="U=1-204"/>
</dbReference>
<dbReference type="PDB" id="8IFD">
    <property type="method" value="EM"/>
    <property type="resolution" value="2.59 A"/>
    <property type="chains" value="2H=1-204"/>
</dbReference>
<dbReference type="PDB" id="8IFE">
    <property type="method" value="EM"/>
    <property type="resolution" value="2.57 A"/>
    <property type="chains" value="2H=1-204"/>
</dbReference>
<dbReference type="PDB" id="8INE">
    <property type="method" value="EM"/>
    <property type="resolution" value="3.20 A"/>
    <property type="chains" value="U=1-204"/>
</dbReference>
<dbReference type="PDB" id="8INF">
    <property type="method" value="EM"/>
    <property type="resolution" value="3.00 A"/>
    <property type="chains" value="U=1-204"/>
</dbReference>
<dbReference type="PDB" id="8INK">
    <property type="method" value="EM"/>
    <property type="resolution" value="3.20 A"/>
    <property type="chains" value="U=1-204"/>
</dbReference>
<dbReference type="PDB" id="8IPD">
    <property type="method" value="EM"/>
    <property type="resolution" value="3.20 A"/>
    <property type="chains" value="U=1-204"/>
</dbReference>
<dbReference type="PDB" id="8IPX">
    <property type="method" value="EM"/>
    <property type="resolution" value="4.30 A"/>
    <property type="chains" value="U=1-204"/>
</dbReference>
<dbReference type="PDB" id="8IPY">
    <property type="method" value="EM"/>
    <property type="resolution" value="3.20 A"/>
    <property type="chains" value="U=1-204"/>
</dbReference>
<dbReference type="PDB" id="8IR1">
    <property type="method" value="EM"/>
    <property type="resolution" value="3.30 A"/>
    <property type="chains" value="U=1-204"/>
</dbReference>
<dbReference type="PDB" id="8IR3">
    <property type="method" value="EM"/>
    <property type="resolution" value="3.50 A"/>
    <property type="chains" value="U=1-204"/>
</dbReference>
<dbReference type="PDB" id="8JDJ">
    <property type="method" value="EM"/>
    <property type="resolution" value="2.50 A"/>
    <property type="chains" value="S=1-204"/>
</dbReference>
<dbReference type="PDB" id="8JDK">
    <property type="method" value="EM"/>
    <property type="resolution" value="2.26 A"/>
    <property type="chains" value="S=1-204"/>
</dbReference>
<dbReference type="PDB" id="8JDL">
    <property type="method" value="EM"/>
    <property type="resolution" value="2.42 A"/>
    <property type="chains" value="S=1-204"/>
</dbReference>
<dbReference type="PDB" id="8JDM">
    <property type="method" value="EM"/>
    <property type="resolution" value="2.67 A"/>
    <property type="chains" value="S=1-204"/>
</dbReference>
<dbReference type="PDB" id="8K2C">
    <property type="method" value="EM"/>
    <property type="resolution" value="2.40 A"/>
    <property type="chains" value="LN=1-204"/>
</dbReference>
<dbReference type="PDB" id="8OHD">
    <property type="method" value="EM"/>
    <property type="resolution" value="3.10 A"/>
    <property type="chains" value="LN=1-204"/>
</dbReference>
<dbReference type="PDB" id="8OJ0">
    <property type="method" value="EM"/>
    <property type="resolution" value="3.30 A"/>
    <property type="chains" value="LN=1-204"/>
</dbReference>
<dbReference type="PDB" id="8OJ5">
    <property type="method" value="EM"/>
    <property type="resolution" value="2.90 A"/>
    <property type="chains" value="LN=1-204"/>
</dbReference>
<dbReference type="PDB" id="8OJ8">
    <property type="method" value="EM"/>
    <property type="resolution" value="3.30 A"/>
    <property type="chains" value="LN=1-204"/>
</dbReference>
<dbReference type="PDB" id="8QFD">
    <property type="method" value="EM"/>
    <property type="resolution" value="2.20 A"/>
    <property type="chains" value="N=1-204"/>
</dbReference>
<dbReference type="PDB" id="8QOI">
    <property type="method" value="EM"/>
    <property type="resolution" value="1.90 A"/>
    <property type="chains" value="LN=1-204"/>
</dbReference>
<dbReference type="PDB" id="8QYX">
    <property type="method" value="EM"/>
    <property type="resolution" value="1.78 A"/>
    <property type="chains" value="H1=1-204"/>
</dbReference>
<dbReference type="PDB" id="8RL2">
    <property type="method" value="EM"/>
    <property type="resolution" value="2.84 A"/>
    <property type="chains" value="LN=1-204"/>
</dbReference>
<dbReference type="PDB" id="8UKB">
    <property type="method" value="EM"/>
    <property type="resolution" value="3.05 A"/>
    <property type="chains" value="LN=2-204"/>
</dbReference>
<dbReference type="PDB" id="8XSX">
    <property type="method" value="EM"/>
    <property type="resolution" value="2.40 A"/>
    <property type="chains" value="LN=1-204"/>
</dbReference>
<dbReference type="PDB" id="8XSY">
    <property type="method" value="EM"/>
    <property type="resolution" value="3.00 A"/>
    <property type="chains" value="LN=1-204"/>
</dbReference>
<dbReference type="PDB" id="8XSZ">
    <property type="method" value="EM"/>
    <property type="resolution" value="3.20 A"/>
    <property type="chains" value="LN=1-204"/>
</dbReference>
<dbReference type="PDB" id="8Y0W">
    <property type="method" value="EM"/>
    <property type="resolution" value="3.40 A"/>
    <property type="chains" value="LN=1-204"/>
</dbReference>
<dbReference type="PDB" id="8Y0X">
    <property type="method" value="EM"/>
    <property type="resolution" value="3.30 A"/>
    <property type="chains" value="LN=1-204"/>
</dbReference>
<dbReference type="PDB" id="8YOO">
    <property type="method" value="EM"/>
    <property type="resolution" value="2.00 A"/>
    <property type="chains" value="LN=1-204"/>
</dbReference>
<dbReference type="PDB" id="8YOP">
    <property type="method" value="EM"/>
    <property type="resolution" value="2.20 A"/>
    <property type="chains" value="LN=1-204"/>
</dbReference>
<dbReference type="PDB" id="9C3H">
    <property type="method" value="EM"/>
    <property type="resolution" value="2.00 A"/>
    <property type="chains" value="LN=1-204"/>
</dbReference>
<dbReference type="PDB" id="9G8M">
    <property type="method" value="EM"/>
    <property type="resolution" value="3.30 A"/>
    <property type="chains" value="LN=1-204"/>
</dbReference>
<dbReference type="PDB" id="9GMO">
    <property type="method" value="EM"/>
    <property type="resolution" value="2.59 A"/>
    <property type="chains" value="l=1-204"/>
</dbReference>
<dbReference type="PDBsum" id="4UG0"/>
<dbReference type="PDBsum" id="4V6X"/>
<dbReference type="PDBsum" id="5AJ0"/>
<dbReference type="PDBsum" id="5LKS"/>
<dbReference type="PDBsum" id="5T2C"/>
<dbReference type="PDBsum" id="6IP5"/>
<dbReference type="PDBsum" id="6IP6"/>
<dbReference type="PDBsum" id="6IP8"/>
<dbReference type="PDBsum" id="6LQM"/>
<dbReference type="PDBsum" id="6LSR"/>
<dbReference type="PDBsum" id="6LSS"/>
<dbReference type="PDBsum" id="6LU8"/>
<dbReference type="PDBsum" id="6OLE"/>
<dbReference type="PDBsum" id="6OLF"/>
<dbReference type="PDBsum" id="6OLG"/>
<dbReference type="PDBsum" id="6OLI"/>
<dbReference type="PDBsum" id="6OLZ"/>
<dbReference type="PDBsum" id="6OM0"/>
<dbReference type="PDBsum" id="6OM7"/>
<dbReference type="PDBsum" id="6QZP"/>
<dbReference type="PDBsum" id="6W6L"/>
<dbReference type="PDBsum" id="6XA1"/>
<dbReference type="PDBsum" id="6Y0G"/>
<dbReference type="PDBsum" id="6Y2L"/>
<dbReference type="PDBsum" id="6Y57"/>
<dbReference type="PDBsum" id="6Y6X"/>
<dbReference type="PDBsum" id="6Z6L"/>
<dbReference type="PDBsum" id="6Z6M"/>
<dbReference type="PDBsum" id="6Z6N"/>
<dbReference type="PDBsum" id="6ZM7"/>
<dbReference type="PDBsum" id="6ZME"/>
<dbReference type="PDBsum" id="6ZMI"/>
<dbReference type="PDBsum" id="6ZMO"/>
<dbReference type="PDBsum" id="7BHP"/>
<dbReference type="PDBsum" id="7F5S"/>
<dbReference type="PDBsum" id="7OW7"/>
<dbReference type="PDBsum" id="7XNX"/>
<dbReference type="PDBsum" id="7XNY"/>
<dbReference type="PDBsum" id="8A3D"/>
<dbReference type="PDBsum" id="8FKP"/>
<dbReference type="PDBsum" id="8FKQ"/>
<dbReference type="PDBsum" id="8FKR"/>
<dbReference type="PDBsum" id="8FKS"/>
<dbReference type="PDBsum" id="8FKT"/>
<dbReference type="PDBsum" id="8FKU"/>
<dbReference type="PDBsum" id="8FKV"/>
<dbReference type="PDBsum" id="8FKW"/>
<dbReference type="PDBsum" id="8FKX"/>
<dbReference type="PDBsum" id="8FKY"/>
<dbReference type="PDBsum" id="8FKZ"/>
<dbReference type="PDBsum" id="8FL2"/>
<dbReference type="PDBsum" id="8FL3"/>
<dbReference type="PDBsum" id="8FL4"/>
<dbReference type="PDBsum" id="8FL6"/>
<dbReference type="PDBsum" id="8FL7"/>
<dbReference type="PDBsum" id="8FL9"/>
<dbReference type="PDBsum" id="8FLA"/>
<dbReference type="PDBsum" id="8FLB"/>
<dbReference type="PDBsum" id="8FLC"/>
<dbReference type="PDBsum" id="8FLD"/>
<dbReference type="PDBsum" id="8FLE"/>
<dbReference type="PDBsum" id="8FLF"/>
<dbReference type="PDBsum" id="8G5Y"/>
<dbReference type="PDBsum" id="8G5Z"/>
<dbReference type="PDBsum" id="8G60"/>
<dbReference type="PDBsum" id="8G61"/>
<dbReference type="PDBsum" id="8G6J"/>
<dbReference type="PDBsum" id="8GLP"/>
<dbReference type="PDBsum" id="8IDT"/>
<dbReference type="PDBsum" id="8IDY"/>
<dbReference type="PDBsum" id="8IE3"/>
<dbReference type="PDBsum" id="8IFD"/>
<dbReference type="PDBsum" id="8IFE"/>
<dbReference type="PDBsum" id="8INE"/>
<dbReference type="PDBsum" id="8INF"/>
<dbReference type="PDBsum" id="8INK"/>
<dbReference type="PDBsum" id="8IPD"/>
<dbReference type="PDBsum" id="8IPX"/>
<dbReference type="PDBsum" id="8IPY"/>
<dbReference type="PDBsum" id="8IR1"/>
<dbReference type="PDBsum" id="8IR3"/>
<dbReference type="PDBsum" id="8JDJ"/>
<dbReference type="PDBsum" id="8JDK"/>
<dbReference type="PDBsum" id="8JDL"/>
<dbReference type="PDBsum" id="8JDM"/>
<dbReference type="PDBsum" id="8K2C"/>
<dbReference type="PDBsum" id="8OHD"/>
<dbReference type="PDBsum" id="8OJ0"/>
<dbReference type="PDBsum" id="8OJ5"/>
<dbReference type="PDBsum" id="8OJ8"/>
<dbReference type="PDBsum" id="8QFD"/>
<dbReference type="PDBsum" id="8QOI"/>
<dbReference type="PDBsum" id="8QYX"/>
<dbReference type="PDBsum" id="8RL2"/>
<dbReference type="PDBsum" id="8UKB"/>
<dbReference type="PDBsum" id="8XSX"/>
<dbReference type="PDBsum" id="8XSY"/>
<dbReference type="PDBsum" id="8XSZ"/>
<dbReference type="PDBsum" id="8Y0W"/>
<dbReference type="PDBsum" id="8Y0X"/>
<dbReference type="PDBsum" id="8YOO"/>
<dbReference type="PDBsum" id="8YOP"/>
<dbReference type="PDBsum" id="9C3H"/>
<dbReference type="PDBsum" id="9G8M"/>
<dbReference type="PDBsum" id="9GMO"/>
<dbReference type="EMDB" id="EMD-0948"/>
<dbReference type="EMDB" id="EMD-0963"/>
<dbReference type="EMDB" id="EMD-0964"/>
<dbReference type="EMDB" id="EMD-0978"/>
<dbReference type="EMDB" id="EMD-10668"/>
<dbReference type="EMDB" id="EMD-10674"/>
<dbReference type="EMDB" id="EMD-10690"/>
<dbReference type="EMDB" id="EMD-10709"/>
<dbReference type="EMDB" id="EMD-11098"/>
<dbReference type="EMDB" id="EMD-11099"/>
<dbReference type="EMDB" id="EMD-11100"/>
<dbReference type="EMDB" id="EMD-11288"/>
<dbReference type="EMDB" id="EMD-11289"/>
<dbReference type="EMDB" id="EMD-11292"/>
<dbReference type="EMDB" id="EMD-11299"/>
<dbReference type="EMDB" id="EMD-12189"/>
<dbReference type="EMDB" id="EMD-13094"/>
<dbReference type="EMDB" id="EMD-15113"/>
<dbReference type="EMDB" id="EMD-16880"/>
<dbReference type="EMDB" id="EMD-16902"/>
<dbReference type="EMDB" id="EMD-16905"/>
<dbReference type="EMDB" id="EMD-16908"/>
<dbReference type="EMDB" id="EMD-18382"/>
<dbReference type="EMDB" id="EMD-18539"/>
<dbReference type="EMDB" id="EMD-18765"/>
<dbReference type="EMDB" id="EMD-19330"/>
<dbReference type="EMDB" id="EMD-29252"/>
<dbReference type="EMDB" id="EMD-29253"/>
<dbReference type="EMDB" id="EMD-29254"/>
<dbReference type="EMDB" id="EMD-29255"/>
<dbReference type="EMDB" id="EMD-29256"/>
<dbReference type="EMDB" id="EMD-29257"/>
<dbReference type="EMDB" id="EMD-29258"/>
<dbReference type="EMDB" id="EMD-29259"/>
<dbReference type="EMDB" id="EMD-29260"/>
<dbReference type="EMDB" id="EMD-29261"/>
<dbReference type="EMDB" id="EMD-29262"/>
<dbReference type="EMDB" id="EMD-29265"/>
<dbReference type="EMDB" id="EMD-29266"/>
<dbReference type="EMDB" id="EMD-29267"/>
<dbReference type="EMDB" id="EMD-29268"/>
<dbReference type="EMDB" id="EMD-29269"/>
<dbReference type="EMDB" id="EMD-29271"/>
<dbReference type="EMDB" id="EMD-29272"/>
<dbReference type="EMDB" id="EMD-29273"/>
<dbReference type="EMDB" id="EMD-29274"/>
<dbReference type="EMDB" id="EMD-29275"/>
<dbReference type="EMDB" id="EMD-29276"/>
<dbReference type="EMDB" id="EMD-29277"/>
<dbReference type="EMDB" id="EMD-29757"/>
<dbReference type="EMDB" id="EMD-29758"/>
<dbReference type="EMDB" id="EMD-29759"/>
<dbReference type="EMDB" id="EMD-29760"/>
<dbReference type="EMDB" id="EMD-29771"/>
<dbReference type="EMDB" id="EMD-31465"/>
<dbReference type="EMDB" id="EMD-33329"/>
<dbReference type="EMDB" id="EMD-33330"/>
<dbReference type="EMDB" id="EMD-35370"/>
<dbReference type="EMDB" id="EMD-35371"/>
<dbReference type="EMDB" id="EMD-35375"/>
<dbReference type="EMDB" id="EMD-35413"/>
<dbReference type="EMDB" id="EMD-35414"/>
<dbReference type="EMDB" id="EMD-35596"/>
<dbReference type="EMDB" id="EMD-35597"/>
<dbReference type="EMDB" id="EMD-35599"/>
<dbReference type="EMDB" id="EMD-35639"/>
<dbReference type="EMDB" id="EMD-35649"/>
<dbReference type="EMDB" id="EMD-35651"/>
<dbReference type="EMDB" id="EMD-35672"/>
<dbReference type="EMDB" id="EMD-35673"/>
<dbReference type="EMDB" id="EMD-36178"/>
<dbReference type="EMDB" id="EMD-36179"/>
<dbReference type="EMDB" id="EMD-36180"/>
<dbReference type="EMDB" id="EMD-36181"/>
<dbReference type="EMDB" id="EMD-36838"/>
<dbReference type="EMDB" id="EMD-38629"/>
<dbReference type="EMDB" id="EMD-38630"/>
<dbReference type="EMDB" id="EMD-38631"/>
<dbReference type="EMDB" id="EMD-3883"/>
<dbReference type="EMDB" id="EMD-39455"/>
<dbReference type="EMDB" id="EMD-39456"/>
<dbReference type="EMDB" id="EMD-40205"/>
<dbReference type="EMDB" id="EMD-4070"/>
<dbReference type="EMDB" id="EMD-42351"/>
<dbReference type="EMDB" id="EMD-45170"/>
<dbReference type="EMDB" id="EMD-51132"/>
<dbReference type="EMDB" id="EMD-51452"/>
<dbReference type="EMDB" id="EMD-9701"/>
<dbReference type="EMDB" id="EMD-9702"/>
<dbReference type="EMDB" id="EMD-9703"/>
<dbReference type="SMR" id="P61313"/>
<dbReference type="BioGRID" id="112058">
    <property type="interactions" value="540"/>
</dbReference>
<dbReference type="ComplexPortal" id="CPX-5183">
    <property type="entry name" value="60S cytosolic large ribosomal subunit"/>
</dbReference>
<dbReference type="ComplexPortal" id="CPX-7664">
    <property type="entry name" value="60S cytosolic large ribosomal subunit, testis-specific variant"/>
</dbReference>
<dbReference type="ComplexPortal" id="CPX-7665">
    <property type="entry name" value="60S cytosolic large ribosomal subunit, striated muscle variant"/>
</dbReference>
<dbReference type="CORUM" id="P61313"/>
<dbReference type="FunCoup" id="P61313">
    <property type="interactions" value="3364"/>
</dbReference>
<dbReference type="IntAct" id="P61313">
    <property type="interactions" value="290"/>
</dbReference>
<dbReference type="MINT" id="P61313"/>
<dbReference type="STRING" id="9606.ENSP00000309334"/>
<dbReference type="DrugBank" id="DB02494">
    <property type="generic name" value="(S)-3-phenyllactic acid"/>
</dbReference>
<dbReference type="DrugBank" id="DB07374">
    <property type="generic name" value="Anisomycin"/>
</dbReference>
<dbReference type="DrugBank" id="DB08437">
    <property type="generic name" value="Puromycin"/>
</dbReference>
<dbReference type="GlyGen" id="P61313">
    <property type="glycosylation" value="1 site, 1 O-linked glycan (1 site)"/>
</dbReference>
<dbReference type="iPTMnet" id="P61313"/>
<dbReference type="PhosphoSitePlus" id="P61313"/>
<dbReference type="SwissPalm" id="P61313"/>
<dbReference type="BioMuta" id="RPL15"/>
<dbReference type="jPOST" id="P61313"/>
<dbReference type="MassIVE" id="P61313"/>
<dbReference type="PaxDb" id="9606-ENSP00000309334"/>
<dbReference type="PeptideAtlas" id="P61313"/>
<dbReference type="PRIDE" id="P61313"/>
<dbReference type="ProteomicsDB" id="57293">
    <molecule id="P61313-1"/>
</dbReference>
<dbReference type="ProteomicsDB" id="65913"/>
<dbReference type="Pumba" id="P61313"/>
<dbReference type="TopDownProteomics" id="P61313-1">
    <molecule id="P61313-1"/>
</dbReference>
<dbReference type="Antibodypedia" id="11374">
    <property type="antibodies" value="241 antibodies from 30 providers"/>
</dbReference>
<dbReference type="DNASU" id="6138"/>
<dbReference type="Ensembl" id="ENST00000307839.10">
    <molecule id="P61313-1"/>
    <property type="protein sequence ID" value="ENSP00000309334.5"/>
    <property type="gene ID" value="ENSG00000174748.22"/>
</dbReference>
<dbReference type="Ensembl" id="ENST00000354811.5">
    <molecule id="P61313-1"/>
    <property type="protein sequence ID" value="ENSP00000346867.5"/>
    <property type="gene ID" value="ENSG00000174748.22"/>
</dbReference>
<dbReference type="Ensembl" id="ENST00000413699.7">
    <molecule id="P61313-1"/>
    <property type="protein sequence ID" value="ENSP00000416692.1"/>
    <property type="gene ID" value="ENSG00000174748.22"/>
</dbReference>
<dbReference type="Ensembl" id="ENST00000415719.5">
    <molecule id="P61313-1"/>
    <property type="protein sequence ID" value="ENSP00000388529.1"/>
    <property type="gene ID" value="ENSG00000174748.22"/>
</dbReference>
<dbReference type="Ensembl" id="ENST00000456530.7">
    <molecule id="P61313-2"/>
    <property type="protein sequence ID" value="ENSP00000398788.2"/>
    <property type="gene ID" value="ENSG00000174748.22"/>
</dbReference>
<dbReference type="Ensembl" id="ENST00000611050.4">
    <molecule id="P61313-1"/>
    <property type="protein sequence ID" value="ENSP00000483260.1"/>
    <property type="gene ID" value="ENSG00000174748.22"/>
</dbReference>
<dbReference type="Ensembl" id="ENST00000644185.1">
    <molecule id="P61313-1"/>
    <property type="protein sequence ID" value="ENSP00000493759.1"/>
    <property type="gene ID" value="ENSG00000174748.22"/>
</dbReference>
<dbReference type="GeneID" id="6138"/>
<dbReference type="KEGG" id="hsa:6138"/>
<dbReference type="MANE-Select" id="ENST00000307839.10">
    <property type="protein sequence ID" value="ENSP00000309334.5"/>
    <property type="RefSeq nucleotide sequence ID" value="NM_002948.5"/>
    <property type="RefSeq protein sequence ID" value="NP_002939.2"/>
</dbReference>
<dbReference type="UCSC" id="uc003ccn.4">
    <molecule id="P61313-1"/>
    <property type="organism name" value="human"/>
</dbReference>
<dbReference type="AGR" id="HGNC:10306"/>
<dbReference type="CTD" id="6138"/>
<dbReference type="DisGeNET" id="6138"/>
<dbReference type="GeneCards" id="RPL15"/>
<dbReference type="GeneReviews" id="RPL15"/>
<dbReference type="HGNC" id="HGNC:10306">
    <property type="gene designation" value="RPL15"/>
</dbReference>
<dbReference type="HPA" id="ENSG00000174748">
    <property type="expression patterns" value="Low tissue specificity"/>
</dbReference>
<dbReference type="MalaCards" id="RPL15"/>
<dbReference type="MIM" id="604174">
    <property type="type" value="gene"/>
</dbReference>
<dbReference type="MIM" id="615550">
    <property type="type" value="phenotype"/>
</dbReference>
<dbReference type="neXtProt" id="NX_P61313"/>
<dbReference type="OpenTargets" id="ENSG00000174748"/>
<dbReference type="Orphanet" id="124">
    <property type="disease" value="Diamond-Blackfan anemia"/>
</dbReference>
<dbReference type="PharmGKB" id="PA34674"/>
<dbReference type="VEuPathDB" id="HostDB:ENSG00000174748"/>
<dbReference type="eggNOG" id="KOG1678">
    <property type="taxonomic scope" value="Eukaryota"/>
</dbReference>
<dbReference type="GeneTree" id="ENSGT00910000144184"/>
<dbReference type="InParanoid" id="P61313"/>
<dbReference type="OMA" id="YIRDAWK"/>
<dbReference type="OrthoDB" id="10255148at2759"/>
<dbReference type="PAN-GO" id="P61313">
    <property type="GO annotations" value="4 GO annotations based on evolutionary models"/>
</dbReference>
<dbReference type="PhylomeDB" id="P61313"/>
<dbReference type="TreeFam" id="TF300050"/>
<dbReference type="PathwayCommons" id="P61313"/>
<dbReference type="Reactome" id="R-HSA-156827">
    <property type="pathway name" value="L13a-mediated translational silencing of Ceruloplasmin expression"/>
</dbReference>
<dbReference type="Reactome" id="R-HSA-156902">
    <property type="pathway name" value="Peptide chain elongation"/>
</dbReference>
<dbReference type="Reactome" id="R-HSA-1799339">
    <property type="pathway name" value="SRP-dependent cotranslational protein targeting to membrane"/>
</dbReference>
<dbReference type="Reactome" id="R-HSA-192823">
    <property type="pathway name" value="Viral mRNA Translation"/>
</dbReference>
<dbReference type="Reactome" id="R-HSA-2408557">
    <property type="pathway name" value="Selenocysteine synthesis"/>
</dbReference>
<dbReference type="Reactome" id="R-HSA-6791226">
    <property type="pathway name" value="Major pathway of rRNA processing in the nucleolus and cytosol"/>
</dbReference>
<dbReference type="Reactome" id="R-HSA-72689">
    <property type="pathway name" value="Formation of a pool of free 40S subunits"/>
</dbReference>
<dbReference type="Reactome" id="R-HSA-72706">
    <property type="pathway name" value="GTP hydrolysis and joining of the 60S ribosomal subunit"/>
</dbReference>
<dbReference type="Reactome" id="R-HSA-72764">
    <property type="pathway name" value="Eukaryotic Translation Termination"/>
</dbReference>
<dbReference type="Reactome" id="R-HSA-9010553">
    <property type="pathway name" value="Regulation of expression of SLITs and ROBOs"/>
</dbReference>
<dbReference type="Reactome" id="R-HSA-9633012">
    <property type="pathway name" value="Response of EIF2AK4 (GCN2) to amino acid deficiency"/>
</dbReference>
<dbReference type="Reactome" id="R-HSA-975956">
    <property type="pathway name" value="Nonsense Mediated Decay (NMD) independent of the Exon Junction Complex (EJC)"/>
</dbReference>
<dbReference type="Reactome" id="R-HSA-975957">
    <property type="pathway name" value="Nonsense Mediated Decay (NMD) enhanced by the Exon Junction Complex (EJC)"/>
</dbReference>
<dbReference type="SignaLink" id="P61313"/>
<dbReference type="SIGNOR" id="P61313"/>
<dbReference type="BioGRID-ORCS" id="6138">
    <property type="hits" value="844 hits in 1127 CRISPR screens"/>
</dbReference>
<dbReference type="CD-CODE" id="91857CE7">
    <property type="entry name" value="Nucleolus"/>
</dbReference>
<dbReference type="ChiTaRS" id="RPL15">
    <property type="organism name" value="human"/>
</dbReference>
<dbReference type="GeneWiki" id="RPL15"/>
<dbReference type="GenomeRNAi" id="6138"/>
<dbReference type="Pharos" id="P61313">
    <property type="development level" value="Tbio"/>
</dbReference>
<dbReference type="PRO" id="PR:P61313"/>
<dbReference type="Proteomes" id="UP000005640">
    <property type="component" value="Chromosome 3"/>
</dbReference>
<dbReference type="RNAct" id="P61313">
    <property type="molecule type" value="protein"/>
</dbReference>
<dbReference type="Bgee" id="ENSG00000174748">
    <property type="expression patterns" value="Expressed in cortical plate and 207 other cell types or tissues"/>
</dbReference>
<dbReference type="ExpressionAtlas" id="P61313">
    <property type="expression patterns" value="baseline and differential"/>
</dbReference>
<dbReference type="GO" id="GO:0005737">
    <property type="term" value="C:cytoplasm"/>
    <property type="evidence" value="ECO:0000303"/>
    <property type="project" value="ComplexPortal"/>
</dbReference>
<dbReference type="GO" id="GO:0005829">
    <property type="term" value="C:cytosol"/>
    <property type="evidence" value="ECO:0000304"/>
    <property type="project" value="Reactome"/>
</dbReference>
<dbReference type="GO" id="GO:0022625">
    <property type="term" value="C:cytosolic large ribosomal subunit"/>
    <property type="evidence" value="ECO:0000314"/>
    <property type="project" value="UniProtKB"/>
</dbReference>
<dbReference type="GO" id="GO:0022626">
    <property type="term" value="C:cytosolic ribosome"/>
    <property type="evidence" value="ECO:0000314"/>
    <property type="project" value="FlyBase"/>
</dbReference>
<dbReference type="GO" id="GO:0005634">
    <property type="term" value="C:nucleus"/>
    <property type="evidence" value="ECO:0000314"/>
    <property type="project" value="BHF-UCL"/>
</dbReference>
<dbReference type="GO" id="GO:0005840">
    <property type="term" value="C:ribosome"/>
    <property type="evidence" value="ECO:0000304"/>
    <property type="project" value="ProtInc"/>
</dbReference>
<dbReference type="GO" id="GO:0045202">
    <property type="term" value="C:synapse"/>
    <property type="evidence" value="ECO:0007669"/>
    <property type="project" value="Ensembl"/>
</dbReference>
<dbReference type="GO" id="GO:0045296">
    <property type="term" value="F:cadherin binding"/>
    <property type="evidence" value="ECO:0007005"/>
    <property type="project" value="BHF-UCL"/>
</dbReference>
<dbReference type="GO" id="GO:0003723">
    <property type="term" value="F:RNA binding"/>
    <property type="evidence" value="ECO:0007005"/>
    <property type="project" value="UniProtKB"/>
</dbReference>
<dbReference type="GO" id="GO:0003735">
    <property type="term" value="F:structural constituent of ribosome"/>
    <property type="evidence" value="ECO:0000314"/>
    <property type="project" value="UniProtKB"/>
</dbReference>
<dbReference type="GO" id="GO:0002181">
    <property type="term" value="P:cytoplasmic translation"/>
    <property type="evidence" value="ECO:0000318"/>
    <property type="project" value="GO_Central"/>
</dbReference>
<dbReference type="GO" id="GO:0006412">
    <property type="term" value="P:translation"/>
    <property type="evidence" value="ECO:0000304"/>
    <property type="project" value="ProtInc"/>
</dbReference>
<dbReference type="FunFam" id="3.40.1120.10:FF:000001">
    <property type="entry name" value="Ribosomal protein L15"/>
    <property type="match status" value="1"/>
</dbReference>
<dbReference type="Gene3D" id="3.40.1120.10">
    <property type="entry name" value="Ribosomal protein l15e"/>
    <property type="match status" value="1"/>
</dbReference>
<dbReference type="InterPro" id="IPR024794">
    <property type="entry name" value="Rbsml_eL15_core_dom_sf"/>
</dbReference>
<dbReference type="InterPro" id="IPR000439">
    <property type="entry name" value="Ribosomal_eL15"/>
</dbReference>
<dbReference type="InterPro" id="IPR020925">
    <property type="entry name" value="Ribosomal_eL15_CS"/>
</dbReference>
<dbReference type="InterPro" id="IPR012678">
    <property type="entry name" value="Ribosomal_uL23/eL15/eS24_sf"/>
</dbReference>
<dbReference type="NCBIfam" id="NF003269">
    <property type="entry name" value="PRK04243.1"/>
    <property type="match status" value="1"/>
</dbReference>
<dbReference type="PANTHER" id="PTHR11847:SF4">
    <property type="entry name" value="LARGE RIBOSOMAL SUBUNIT PROTEIN EL15"/>
    <property type="match status" value="1"/>
</dbReference>
<dbReference type="PANTHER" id="PTHR11847">
    <property type="entry name" value="RIBOSOMAL PROTEIN L15"/>
    <property type="match status" value="1"/>
</dbReference>
<dbReference type="Pfam" id="PF00827">
    <property type="entry name" value="Ribosomal_L15e"/>
    <property type="match status" value="1"/>
</dbReference>
<dbReference type="SMART" id="SM01384">
    <property type="entry name" value="Ribosomal_L15e"/>
    <property type="match status" value="1"/>
</dbReference>
<dbReference type="SUPFAM" id="SSF54189">
    <property type="entry name" value="Ribosomal proteins S24e, L23 and L15e"/>
    <property type="match status" value="1"/>
</dbReference>
<dbReference type="PROSITE" id="PS01194">
    <property type="entry name" value="RIBOSOMAL_L15E"/>
    <property type="match status" value="1"/>
</dbReference>
<evidence type="ECO:0000250" key="1">
    <source>
        <dbReference type="UniProtKB" id="P61314"/>
    </source>
</evidence>
<evidence type="ECO:0000256" key="2">
    <source>
        <dbReference type="SAM" id="MobiDB-lite"/>
    </source>
</evidence>
<evidence type="ECO:0000269" key="3">
    <source>
    </source>
</evidence>
<evidence type="ECO:0000269" key="4">
    <source>
    </source>
</evidence>
<evidence type="ECO:0000269" key="5">
    <source>
    </source>
</evidence>
<evidence type="ECO:0000269" key="6">
    <source>
    </source>
</evidence>
<evidence type="ECO:0000269" key="7">
    <source>
    </source>
</evidence>
<evidence type="ECO:0000303" key="8">
    <source>
    </source>
</evidence>
<evidence type="ECO:0000303" key="9">
    <source>
    </source>
</evidence>
<evidence type="ECO:0000305" key="10"/>
<evidence type="ECO:0007744" key="11">
    <source>
        <dbReference type="PDB" id="6LQM"/>
    </source>
</evidence>
<evidence type="ECO:0007744" key="12">
    <source>
        <dbReference type="PDB" id="6LSR"/>
    </source>
</evidence>
<evidence type="ECO:0007744" key="13">
    <source>
        <dbReference type="PDB" id="6LSS"/>
    </source>
</evidence>
<evidence type="ECO:0007744" key="14">
    <source>
        <dbReference type="PDB" id="6LU8"/>
    </source>
</evidence>
<evidence type="ECO:0007744" key="15">
    <source>
    </source>
</evidence>
<evidence type="ECO:0007744" key="16">
    <source>
    </source>
</evidence>
<evidence type="ECO:0007744" key="17">
    <source>
    </source>
</evidence>
<evidence type="ECO:0007744" key="18">
    <source>
    </source>
</evidence>
<evidence type="ECO:0007744" key="19">
    <source>
    </source>
</evidence>
<proteinExistence type="evidence at protein level"/>
<protein>
    <recommendedName>
        <fullName evidence="9">Large ribosomal subunit protein eL15</fullName>
    </recommendedName>
    <alternativeName>
        <fullName>60S ribosomal protein L15</fullName>
    </alternativeName>
</protein>
<feature type="initiator methionine" description="Removed" evidence="6">
    <location>
        <position position="1"/>
    </location>
</feature>
<feature type="chain" id="PRO_0000127527" description="Large ribosomal subunit protein eL15">
    <location>
        <begin position="2"/>
        <end position="204"/>
    </location>
</feature>
<feature type="region of interest" description="Disordered" evidence="2">
    <location>
        <begin position="165"/>
        <end position="186"/>
    </location>
</feature>
<feature type="compositionally biased region" description="Basic residues" evidence="2">
    <location>
        <begin position="169"/>
        <end position="182"/>
    </location>
</feature>
<feature type="modified residue" description="Phosphoserine" evidence="1">
    <location>
        <position position="34"/>
    </location>
</feature>
<feature type="modified residue" description="Phosphoserine" evidence="15 17 18">
    <location>
        <position position="97"/>
    </location>
</feature>
<feature type="modified residue" description="Phosphoserine" evidence="16">
    <location>
        <position position="100"/>
    </location>
</feature>
<feature type="lipid moiety-binding region" description="N-myristoyl glycine" evidence="6">
    <location>
        <position position="2"/>
    </location>
</feature>
<feature type="cross-link" description="Glycyl lysine isopeptide (Lys-Gly) (interchain with G-Cter in SUMO2)" evidence="19">
    <location>
        <position position="83"/>
    </location>
</feature>
<feature type="splice variant" id="VSP_045144" description="In isoform 2." evidence="8">
    <original>VGEDSTYKFFEVILIDPFHKAIRRNPDTQWITKPVHKHREMRGLTSAGRKSRGLGKGHKFHHTIGGSRRAAWRRRNTLQLHRYR</original>
    <variation>MESHSHSGGSAVGQSRLTATSVSRV</variation>
    <location>
        <begin position="121"/>
        <end position="204"/>
    </location>
</feature>
<feature type="sequence conflict" description="In Ref. 5; AAG44837." evidence="10" ref="5">
    <original>V</original>
    <variation>L</variation>
    <location>
        <position position="101"/>
    </location>
</feature>
<feature type="sequence conflict" description="In Ref. 1; AAA36583 and 3; BAB79461." evidence="10" ref="1 3">
    <original>F</original>
    <variation>A</variation>
    <location>
        <position position="129"/>
    </location>
</feature>
<feature type="sequence conflict" description="In Ref. 1; AAA36583." evidence="10" ref="1">
    <original>V</original>
    <variation>D</variation>
    <location>
        <position position="155"/>
    </location>
</feature>
<feature type="sequence conflict" description="In Ref. 10; AAH14837." evidence="10" ref="10">
    <original>F</original>
    <variation>S</variation>
    <location>
        <position position="180"/>
    </location>
</feature>
<reference key="1">
    <citation type="submission" date="1993-11" db="EMBL/GenBank/DDBJ databases">
        <title>cDNA encoding the human homologue of yeast ribosomal protein YL10.</title>
        <authorList>
            <person name="Herzog H."/>
        </authorList>
    </citation>
    <scope>NUCLEOTIDE SEQUENCE [MRNA] (ISOFORM 1)</scope>
</reference>
<reference key="2">
    <citation type="submission" date="2000-06" db="EMBL/GenBank/DDBJ databases">
        <title>Cloning and characterization of EC45 gene, encoding human ribosomal protein L15 and overexpressing in esophageal cancer.</title>
        <authorList>
            <person name="Wang Q."/>
            <person name="Yang C."/>
            <person name="Zhou J."/>
            <person name="Liu Z."/>
            <person name="Wang X."/>
            <person name="Zhou C."/>
            <person name="Wu M."/>
        </authorList>
    </citation>
    <scope>NUCLEOTIDE SEQUENCE [MRNA] (ISOFORM 1)</scope>
</reference>
<reference key="3">
    <citation type="submission" date="2001-05" db="EMBL/GenBank/DDBJ databases">
        <title>Structures of 69 human ribosomal protein genes: cloning, sequencing, and comparative analysis.</title>
        <authorList>
            <person name="Yoshihama M."/>
            <person name="Uechi T."/>
            <person name="Asakawa S."/>
            <person name="Kawasaki K."/>
            <person name="Kato S."/>
            <person name="Higa S."/>
            <person name="Maeda N."/>
            <person name="Tanaka T."/>
            <person name="Shimizu N."/>
            <person name="Kenmochi N."/>
        </authorList>
    </citation>
    <scope>NUCLEOTIDE SEQUENCE [GENOMIC DNA]</scope>
</reference>
<reference key="4">
    <citation type="submission" date="2003-07" db="EMBL/GenBank/DDBJ databases">
        <title>Cloning of a new isoform of ribosomal protein L15 in testis.</title>
        <authorList>
            <person name="Lu L."/>
            <person name="Huang X.Y."/>
            <person name="Xu M."/>
            <person name="Yin L.L."/>
            <person name="Li J.M."/>
            <person name="Zhou Z.M."/>
            <person name="Sha J.H."/>
        </authorList>
    </citation>
    <scope>NUCLEOTIDE SEQUENCE [MRNA] (ISOFORM 1)</scope>
    <source>
        <tissue>Testis</tissue>
    </source>
</reference>
<reference key="5">
    <citation type="submission" date="2000-09" db="EMBL/GenBank/DDBJ databases">
        <title>Pediatric leukemia cDNA sequencing project.</title>
        <authorList>
            <person name="Villalon D.K."/>
            <person name="Luna R.A."/>
            <person name="Margolin J.K."/>
            <person name="Tsang Y.T.M."/>
            <person name="Hale S.M."/>
            <person name="Mei G."/>
            <person name="Bouck J."/>
            <person name="Gibbs R.A."/>
        </authorList>
    </citation>
    <scope>NUCLEOTIDE SEQUENCE [LARGE SCALE MRNA] (ISOFORM 1)</scope>
    <source>
        <tissue>Leukemia</tissue>
    </source>
</reference>
<reference key="6">
    <citation type="journal article" date="2004" name="Nat. Genet.">
        <title>Complete sequencing and characterization of 21,243 full-length human cDNAs.</title>
        <authorList>
            <person name="Ota T."/>
            <person name="Suzuki Y."/>
            <person name="Nishikawa T."/>
            <person name="Otsuki T."/>
            <person name="Sugiyama T."/>
            <person name="Irie R."/>
            <person name="Wakamatsu A."/>
            <person name="Hayashi K."/>
            <person name="Sato H."/>
            <person name="Nagai K."/>
            <person name="Kimura K."/>
            <person name="Makita H."/>
            <person name="Sekine M."/>
            <person name="Obayashi M."/>
            <person name="Nishi T."/>
            <person name="Shibahara T."/>
            <person name="Tanaka T."/>
            <person name="Ishii S."/>
            <person name="Yamamoto J."/>
            <person name="Saito K."/>
            <person name="Kawai Y."/>
            <person name="Isono Y."/>
            <person name="Nakamura Y."/>
            <person name="Nagahari K."/>
            <person name="Murakami K."/>
            <person name="Yasuda T."/>
            <person name="Iwayanagi T."/>
            <person name="Wagatsuma M."/>
            <person name="Shiratori A."/>
            <person name="Sudo H."/>
            <person name="Hosoiri T."/>
            <person name="Kaku Y."/>
            <person name="Kodaira H."/>
            <person name="Kondo H."/>
            <person name="Sugawara M."/>
            <person name="Takahashi M."/>
            <person name="Kanda K."/>
            <person name="Yokoi T."/>
            <person name="Furuya T."/>
            <person name="Kikkawa E."/>
            <person name="Omura Y."/>
            <person name="Abe K."/>
            <person name="Kamihara K."/>
            <person name="Katsuta N."/>
            <person name="Sato K."/>
            <person name="Tanikawa M."/>
            <person name="Yamazaki M."/>
            <person name="Ninomiya K."/>
            <person name="Ishibashi T."/>
            <person name="Yamashita H."/>
            <person name="Murakawa K."/>
            <person name="Fujimori K."/>
            <person name="Tanai H."/>
            <person name="Kimata M."/>
            <person name="Watanabe M."/>
            <person name="Hiraoka S."/>
            <person name="Chiba Y."/>
            <person name="Ishida S."/>
            <person name="Ono Y."/>
            <person name="Takiguchi S."/>
            <person name="Watanabe S."/>
            <person name="Yosida M."/>
            <person name="Hotuta T."/>
            <person name="Kusano J."/>
            <person name="Kanehori K."/>
            <person name="Takahashi-Fujii A."/>
            <person name="Hara H."/>
            <person name="Tanase T.-O."/>
            <person name="Nomura Y."/>
            <person name="Togiya S."/>
            <person name="Komai F."/>
            <person name="Hara R."/>
            <person name="Takeuchi K."/>
            <person name="Arita M."/>
            <person name="Imose N."/>
            <person name="Musashino K."/>
            <person name="Yuuki H."/>
            <person name="Oshima A."/>
            <person name="Sasaki N."/>
            <person name="Aotsuka S."/>
            <person name="Yoshikawa Y."/>
            <person name="Matsunawa H."/>
            <person name="Ichihara T."/>
            <person name="Shiohata N."/>
            <person name="Sano S."/>
            <person name="Moriya S."/>
            <person name="Momiyama H."/>
            <person name="Satoh N."/>
            <person name="Takami S."/>
            <person name="Terashima Y."/>
            <person name="Suzuki O."/>
            <person name="Nakagawa S."/>
            <person name="Senoh A."/>
            <person name="Mizoguchi H."/>
            <person name="Goto Y."/>
            <person name="Shimizu F."/>
            <person name="Wakebe H."/>
            <person name="Hishigaki H."/>
            <person name="Watanabe T."/>
            <person name="Sugiyama A."/>
            <person name="Takemoto M."/>
            <person name="Kawakami B."/>
            <person name="Yamazaki M."/>
            <person name="Watanabe K."/>
            <person name="Kumagai A."/>
            <person name="Itakura S."/>
            <person name="Fukuzumi Y."/>
            <person name="Fujimori Y."/>
            <person name="Komiyama M."/>
            <person name="Tashiro H."/>
            <person name="Tanigami A."/>
            <person name="Fujiwara T."/>
            <person name="Ono T."/>
            <person name="Yamada K."/>
            <person name="Fujii Y."/>
            <person name="Ozaki K."/>
            <person name="Hirao M."/>
            <person name="Ohmori Y."/>
            <person name="Kawabata A."/>
            <person name="Hikiji T."/>
            <person name="Kobatake N."/>
            <person name="Inagaki H."/>
            <person name="Ikema Y."/>
            <person name="Okamoto S."/>
            <person name="Okitani R."/>
            <person name="Kawakami T."/>
            <person name="Noguchi S."/>
            <person name="Itoh T."/>
            <person name="Shigeta K."/>
            <person name="Senba T."/>
            <person name="Matsumura K."/>
            <person name="Nakajima Y."/>
            <person name="Mizuno T."/>
            <person name="Morinaga M."/>
            <person name="Sasaki M."/>
            <person name="Togashi T."/>
            <person name="Oyama M."/>
            <person name="Hata H."/>
            <person name="Watanabe M."/>
            <person name="Komatsu T."/>
            <person name="Mizushima-Sugano J."/>
            <person name="Satoh T."/>
            <person name="Shirai Y."/>
            <person name="Takahashi Y."/>
            <person name="Nakagawa K."/>
            <person name="Okumura K."/>
            <person name="Nagase T."/>
            <person name="Nomura N."/>
            <person name="Kikuchi H."/>
            <person name="Masuho Y."/>
            <person name="Yamashita R."/>
            <person name="Nakai K."/>
            <person name="Yada T."/>
            <person name="Nakamura Y."/>
            <person name="Ohara O."/>
            <person name="Isogai T."/>
            <person name="Sugano S."/>
        </authorList>
    </citation>
    <scope>NUCLEOTIDE SEQUENCE [LARGE SCALE MRNA] (ISOFORM 1)</scope>
    <source>
        <tissue>Lung</tissue>
        <tissue>Small intestine</tissue>
    </source>
</reference>
<reference key="7">
    <citation type="submission" date="2004-10" db="EMBL/GenBank/DDBJ databases">
        <title>Cloning of human full-length CDSs in BD Creator(TM) system donor vector.</title>
        <authorList>
            <person name="Kalnine N."/>
            <person name="Chen X."/>
            <person name="Rolfs A."/>
            <person name="Halleck A."/>
            <person name="Hines L."/>
            <person name="Eisenstein S."/>
            <person name="Koundinya M."/>
            <person name="Raphael J."/>
            <person name="Moreira D."/>
            <person name="Kelley T."/>
            <person name="LaBaer J."/>
            <person name="Lin Y."/>
            <person name="Phelan M."/>
            <person name="Farmer A."/>
        </authorList>
    </citation>
    <scope>NUCLEOTIDE SEQUENCE [LARGE SCALE MRNA] (ISOFORM 1)</scope>
</reference>
<reference key="8">
    <citation type="submission" date="2005-07" db="EMBL/GenBank/DDBJ databases">
        <authorList>
            <person name="Mural R.J."/>
            <person name="Istrail S."/>
            <person name="Sutton G.G."/>
            <person name="Florea L."/>
            <person name="Halpern A.L."/>
            <person name="Mobarry C.M."/>
            <person name="Lippert R."/>
            <person name="Walenz B."/>
            <person name="Shatkay H."/>
            <person name="Dew I."/>
            <person name="Miller J.R."/>
            <person name="Flanigan M.J."/>
            <person name="Edwards N.J."/>
            <person name="Bolanos R."/>
            <person name="Fasulo D."/>
            <person name="Halldorsson B.V."/>
            <person name="Hannenhalli S."/>
            <person name="Turner R."/>
            <person name="Yooseph S."/>
            <person name="Lu F."/>
            <person name="Nusskern D.R."/>
            <person name="Shue B.C."/>
            <person name="Zheng X.H."/>
            <person name="Zhong F."/>
            <person name="Delcher A.L."/>
            <person name="Huson D.H."/>
            <person name="Kravitz S.A."/>
            <person name="Mouchard L."/>
            <person name="Reinert K."/>
            <person name="Remington K.A."/>
            <person name="Clark A.G."/>
            <person name="Waterman M.S."/>
            <person name="Eichler E.E."/>
            <person name="Adams M.D."/>
            <person name="Hunkapiller M.W."/>
            <person name="Myers E.W."/>
            <person name="Venter J.C."/>
        </authorList>
    </citation>
    <scope>NUCLEOTIDE SEQUENCE [LARGE SCALE GENOMIC DNA]</scope>
</reference>
<reference key="9">
    <citation type="journal article" date="2006" name="Nature">
        <title>The DNA sequence, annotation and analysis of human chromosome 3.</title>
        <authorList>
            <person name="Muzny D.M."/>
            <person name="Scherer S.E."/>
            <person name="Kaul R."/>
            <person name="Wang J."/>
            <person name="Yu J."/>
            <person name="Sudbrak R."/>
            <person name="Buhay C.J."/>
            <person name="Chen R."/>
            <person name="Cree A."/>
            <person name="Ding Y."/>
            <person name="Dugan-Rocha S."/>
            <person name="Gill R."/>
            <person name="Gunaratne P."/>
            <person name="Harris R.A."/>
            <person name="Hawes A.C."/>
            <person name="Hernandez J."/>
            <person name="Hodgson A.V."/>
            <person name="Hume J."/>
            <person name="Jackson A."/>
            <person name="Khan Z.M."/>
            <person name="Kovar-Smith C."/>
            <person name="Lewis L.R."/>
            <person name="Lozado R.J."/>
            <person name="Metzker M.L."/>
            <person name="Milosavljevic A."/>
            <person name="Miner G.R."/>
            <person name="Morgan M.B."/>
            <person name="Nazareth L.V."/>
            <person name="Scott G."/>
            <person name="Sodergren E."/>
            <person name="Song X.-Z."/>
            <person name="Steffen D."/>
            <person name="Wei S."/>
            <person name="Wheeler D.A."/>
            <person name="Wright M.W."/>
            <person name="Worley K.C."/>
            <person name="Yuan Y."/>
            <person name="Zhang Z."/>
            <person name="Adams C.Q."/>
            <person name="Ansari-Lari M.A."/>
            <person name="Ayele M."/>
            <person name="Brown M.J."/>
            <person name="Chen G."/>
            <person name="Chen Z."/>
            <person name="Clendenning J."/>
            <person name="Clerc-Blankenburg K.P."/>
            <person name="Chen R."/>
            <person name="Chen Z."/>
            <person name="Davis C."/>
            <person name="Delgado O."/>
            <person name="Dinh H.H."/>
            <person name="Dong W."/>
            <person name="Draper H."/>
            <person name="Ernst S."/>
            <person name="Fu G."/>
            <person name="Gonzalez-Garay M.L."/>
            <person name="Garcia D.K."/>
            <person name="Gillett W."/>
            <person name="Gu J."/>
            <person name="Hao B."/>
            <person name="Haugen E."/>
            <person name="Havlak P."/>
            <person name="He X."/>
            <person name="Hennig S."/>
            <person name="Hu S."/>
            <person name="Huang W."/>
            <person name="Jackson L.R."/>
            <person name="Jacob L.S."/>
            <person name="Kelly S.H."/>
            <person name="Kube M."/>
            <person name="Levy R."/>
            <person name="Li Z."/>
            <person name="Liu B."/>
            <person name="Liu J."/>
            <person name="Liu W."/>
            <person name="Lu J."/>
            <person name="Maheshwari M."/>
            <person name="Nguyen B.-V."/>
            <person name="Okwuonu G.O."/>
            <person name="Palmeiri A."/>
            <person name="Pasternak S."/>
            <person name="Perez L.M."/>
            <person name="Phelps K.A."/>
            <person name="Plopper F.J."/>
            <person name="Qiang B."/>
            <person name="Raymond C."/>
            <person name="Rodriguez R."/>
            <person name="Saenphimmachak C."/>
            <person name="Santibanez J."/>
            <person name="Shen H."/>
            <person name="Shen Y."/>
            <person name="Subramanian S."/>
            <person name="Tabor P.E."/>
            <person name="Verduzco D."/>
            <person name="Waldron L."/>
            <person name="Wang J."/>
            <person name="Wang J."/>
            <person name="Wang Q."/>
            <person name="Williams G.A."/>
            <person name="Wong G.K.-S."/>
            <person name="Yao Z."/>
            <person name="Zhang J."/>
            <person name="Zhang X."/>
            <person name="Zhao G."/>
            <person name="Zhou J."/>
            <person name="Zhou Y."/>
            <person name="Nelson D."/>
            <person name="Lehrach H."/>
            <person name="Reinhardt R."/>
            <person name="Naylor S.L."/>
            <person name="Yang H."/>
            <person name="Olson M."/>
            <person name="Weinstock G."/>
            <person name="Gibbs R.A."/>
        </authorList>
    </citation>
    <scope>NUCLEOTIDE SEQUENCE [LARGE SCALE GENOMIC DNA]</scope>
</reference>
<reference key="10">
    <citation type="journal article" date="2004" name="Genome Res.">
        <title>The status, quality, and expansion of the NIH full-length cDNA project: the Mammalian Gene Collection (MGC).</title>
        <authorList>
            <consortium name="The MGC Project Team"/>
        </authorList>
    </citation>
    <scope>NUCLEOTIDE SEQUENCE [LARGE SCALE MRNA] (ISOFORMS 1 AND 2)</scope>
    <source>
        <tissue>Bone</tissue>
        <tissue>Brain</tissue>
        <tissue>Cervix</tissue>
        <tissue>Skin</tissue>
    </source>
</reference>
<reference key="11">
    <citation type="journal article" date="2003" name="Nature">
        <title>Proteomic characterization of the human centrosome by protein correlation profiling.</title>
        <authorList>
            <person name="Andersen J.S."/>
            <person name="Wilkinson C.J."/>
            <person name="Mayor T."/>
            <person name="Mortensen P."/>
            <person name="Nigg E.A."/>
            <person name="Mann M."/>
        </authorList>
    </citation>
    <scope>IDENTIFICATION BY MASS SPECTROMETRY</scope>
    <source>
        <tissue>Lymphoblast</tissue>
    </source>
</reference>
<reference key="12">
    <citation type="journal article" date="2008" name="Proc. Natl. Acad. Sci. U.S.A.">
        <title>A quantitative atlas of mitotic phosphorylation.</title>
        <authorList>
            <person name="Dephoure N."/>
            <person name="Zhou C."/>
            <person name="Villen J."/>
            <person name="Beausoleil S.A."/>
            <person name="Bakalarski C.E."/>
            <person name="Elledge S.J."/>
            <person name="Gygi S.P."/>
        </authorList>
    </citation>
    <scope>PHOSPHORYLATION [LARGE SCALE ANALYSIS] AT SER-97</scope>
    <scope>IDENTIFICATION BY MASS SPECTROMETRY [LARGE SCALE ANALYSIS]</scope>
    <source>
        <tissue>Cervix carcinoma</tissue>
    </source>
</reference>
<reference key="13">
    <citation type="journal article" date="2009" name="Mol. Cell. Proteomics">
        <title>Large-scale proteomics analysis of the human kinome.</title>
        <authorList>
            <person name="Oppermann F.S."/>
            <person name="Gnad F."/>
            <person name="Olsen J.V."/>
            <person name="Hornberger R."/>
            <person name="Greff Z."/>
            <person name="Keri G."/>
            <person name="Mann M."/>
            <person name="Daub H."/>
        </authorList>
    </citation>
    <scope>PHOSPHORYLATION [LARGE SCALE ANALYSIS] AT SER-100</scope>
    <scope>IDENTIFICATION BY MASS SPECTROMETRY [LARGE SCALE ANALYSIS]</scope>
</reference>
<reference key="14">
    <citation type="journal article" date="2011" name="BMC Syst. Biol.">
        <title>Initial characterization of the human central proteome.</title>
        <authorList>
            <person name="Burkard T.R."/>
            <person name="Planyavsky M."/>
            <person name="Kaupe I."/>
            <person name="Breitwieser F.P."/>
            <person name="Buerckstuemmer T."/>
            <person name="Bennett K.L."/>
            <person name="Superti-Furga G."/>
            <person name="Colinge J."/>
        </authorList>
    </citation>
    <scope>IDENTIFICATION BY MASS SPECTROMETRY [LARGE SCALE ANALYSIS]</scope>
</reference>
<reference key="15">
    <citation type="journal article" date="2011" name="DNA Cell Biol.">
        <title>A novel interaction between interferon-inducible protein p56 and ribosomal protein L15 in gastric cancer cells.</title>
        <authorList>
            <person name="Hsu Y.A."/>
            <person name="Lin H.J."/>
            <person name="Sheu J.J."/>
            <person name="Shieh F.K."/>
            <person name="Chen S.Y."/>
            <person name="Lai C.H."/>
            <person name="Tsai F.J."/>
            <person name="Wan L."/>
            <person name="Chen B.H."/>
        </authorList>
    </citation>
    <scope>INTERACTION WITH IFIT1</scope>
</reference>
<reference key="16">
    <citation type="journal article" date="2011" name="Sci. Signal.">
        <title>System-wide temporal characterization of the proteome and phosphoproteome of human embryonic stem cell differentiation.</title>
        <authorList>
            <person name="Rigbolt K.T."/>
            <person name="Prokhorova T.A."/>
            <person name="Akimov V."/>
            <person name="Henningsen J."/>
            <person name="Johansen P.T."/>
            <person name="Kratchmarova I."/>
            <person name="Kassem M."/>
            <person name="Mann M."/>
            <person name="Olsen J.V."/>
            <person name="Blagoev B."/>
        </authorList>
    </citation>
    <scope>PHOSPHORYLATION [LARGE SCALE ANALYSIS] AT SER-97</scope>
    <scope>IDENTIFICATION BY MASS SPECTROMETRY [LARGE SCALE ANALYSIS]</scope>
</reference>
<reference key="17">
    <citation type="journal article" date="2013" name="J. Proteome Res.">
        <title>Toward a comprehensive characterization of a human cancer cell phosphoproteome.</title>
        <authorList>
            <person name="Zhou H."/>
            <person name="Di Palma S."/>
            <person name="Preisinger C."/>
            <person name="Peng M."/>
            <person name="Polat A.N."/>
            <person name="Heck A.J."/>
            <person name="Mohammed S."/>
        </authorList>
    </citation>
    <scope>PHOSPHORYLATION [LARGE SCALE ANALYSIS] AT SER-97</scope>
    <scope>IDENTIFICATION BY MASS SPECTROMETRY [LARGE SCALE ANALYSIS]</scope>
    <source>
        <tissue>Erythroleukemia</tissue>
    </source>
</reference>
<reference key="18">
    <citation type="journal article" date="2014" name="Curr. Opin. Struct. Biol.">
        <title>A new system for naming ribosomal proteins.</title>
        <authorList>
            <person name="Ban N."/>
            <person name="Beckmann R."/>
            <person name="Cate J.H.D."/>
            <person name="Dinman J.D."/>
            <person name="Dragon F."/>
            <person name="Ellis S.R."/>
            <person name="Lafontaine D.L.J."/>
            <person name="Lindahl L."/>
            <person name="Liljas A."/>
            <person name="Lipton J.M."/>
            <person name="McAlear M.A."/>
            <person name="Moore P.B."/>
            <person name="Noller H.F."/>
            <person name="Ortega J."/>
            <person name="Panse V.G."/>
            <person name="Ramakrishnan V."/>
            <person name="Spahn C.M.T."/>
            <person name="Steitz T.A."/>
            <person name="Tchorzewski M."/>
            <person name="Tollervey D."/>
            <person name="Warren A.J."/>
            <person name="Williamson J.R."/>
            <person name="Wilson D."/>
            <person name="Yonath A."/>
            <person name="Yusupov M."/>
        </authorList>
    </citation>
    <scope>NOMENCLATURE</scope>
</reference>
<reference key="19">
    <citation type="journal article" date="2014" name="Nat. Commun.">
        <title>Global profiling of co- and post-translationally N-myristoylated proteomes in human cells.</title>
        <authorList>
            <person name="Thinon E."/>
            <person name="Serwa R.A."/>
            <person name="Broncel M."/>
            <person name="Brannigan J.A."/>
            <person name="Brassat U."/>
            <person name="Wright M.H."/>
            <person name="Heal W.P."/>
            <person name="Wilkinson A.J."/>
            <person name="Mann D.J."/>
            <person name="Tate E.W."/>
        </authorList>
    </citation>
    <scope>MYRISTOYLATION AT GLY-2</scope>
    <scope>CLEAVAGE OF INITIATOR METHIONINE</scope>
    <scope>IDENTIFICATION BY MASS SPECTROMETRY</scope>
</reference>
<reference key="20">
    <citation type="journal article" date="2015" name="Proteomics">
        <title>N-terminome analysis of the human mitochondrial proteome.</title>
        <authorList>
            <person name="Vaca Jacome A.S."/>
            <person name="Rabilloud T."/>
            <person name="Schaeffer-Reiss C."/>
            <person name="Rompais M."/>
            <person name="Ayoub D."/>
            <person name="Lane L."/>
            <person name="Bairoch A."/>
            <person name="Van Dorsselaer A."/>
            <person name="Carapito C."/>
        </authorList>
    </citation>
    <scope>IDENTIFICATION BY MASS SPECTROMETRY [LARGE SCALE ANALYSIS]</scope>
</reference>
<reference key="21">
    <citation type="journal article" date="2017" name="Nat. Struct. Mol. Biol.">
        <title>Site-specific mapping of the human SUMO proteome reveals co-modification with phosphorylation.</title>
        <authorList>
            <person name="Hendriks I.A."/>
            <person name="Lyon D."/>
            <person name="Young C."/>
            <person name="Jensen L.J."/>
            <person name="Vertegaal A.C."/>
            <person name="Nielsen M.L."/>
        </authorList>
    </citation>
    <scope>SUMOYLATION [LARGE SCALE ANALYSIS] AT LYS-83</scope>
    <scope>IDENTIFICATION BY MASS SPECTROMETRY [LARGE SCALE ANALYSIS]</scope>
</reference>
<reference key="22">
    <citation type="journal article" date="2013" name="Nature">
        <title>Structures of the human and Drosophila 80S ribosome.</title>
        <authorList>
            <person name="Anger A.M."/>
            <person name="Armache J.P."/>
            <person name="Berninghausen O."/>
            <person name="Habeck M."/>
            <person name="Subklewe M."/>
            <person name="Wilson D.N."/>
            <person name="Beckmann R."/>
        </authorList>
    </citation>
    <scope>STRUCTURE BY ELECTRON MICROSCOPY (5.0 ANGSTROMS)</scope>
    <scope>FUNCTION</scope>
    <scope>SUBUNIT</scope>
    <scope>SUBCELLULAR LOCATION</scope>
</reference>
<reference evidence="11 12 13 14" key="23">
    <citation type="journal article" date="2020" name="Nat. Commun.">
        <title>Structural snapshots of human pre-60S ribosomal particles before and after nuclear export.</title>
        <authorList>
            <person name="Liang X."/>
            <person name="Zuo M.Q."/>
            <person name="Zhang Y."/>
            <person name="Li N."/>
            <person name="Ma C."/>
            <person name="Dong M.Q."/>
            <person name="Gao N."/>
        </authorList>
    </citation>
    <scope>STRUCTURE BY ELECTRON MICROSCOPY (3.09 ANGSTROMS)</scope>
    <scope>FUNCTION</scope>
    <scope>SUBUNIT</scope>
</reference>
<reference key="24">
    <citation type="journal article" date="2013" name="Hum. Genet.">
        <title>Novel deletion of RPL15 identified by array-comparative genomic hybridization in Diamond-Blackfan anemia.</title>
        <authorList>
            <person name="Landowski M."/>
            <person name="O'Donohue M.F."/>
            <person name="Buros C."/>
            <person name="Ghazvinian R."/>
            <person name="Montel-Lehry N."/>
            <person name="Vlachos A."/>
            <person name="Sieff C.A."/>
            <person name="Newburger P.E."/>
            <person name="Niewiadomska E."/>
            <person name="Matysiak M."/>
            <person name="Glader B."/>
            <person name="Atsidaftos E."/>
            <person name="Lipton J.M."/>
            <person name="Beggs A.H."/>
            <person name="Gleizes P.E."/>
            <person name="Gazda H.T."/>
        </authorList>
    </citation>
    <scope>INVOLVEMENT IN DBA12</scope>
</reference>
<name>RL15_HUMAN</name>